<sequence length="200" mass="22880">MAVRVSKAERQRLLREKINENPFYTDDELADMFGVSVQTIRLDRMELGIPEVRERIKNVAEENYRKVKTILGAEVVGELIDLELGKRGISIFEPTEDMVFVKTKIVKGQYIYSQAESLALSLIDAPAALIGVANIKYKYPVKVGDRLVAKAEVIRQRGNKYFVWVKIKVKEKEVFRGKFILVALEEDFLKKRSDTVEVGN</sequence>
<dbReference type="EMBL" id="AE008691">
    <property type="protein sequence ID" value="AAM24699.1"/>
    <property type="molecule type" value="Genomic_DNA"/>
</dbReference>
<dbReference type="RefSeq" id="WP_009611352.1">
    <property type="nucleotide sequence ID" value="NZ_JANUCV010000001.1"/>
</dbReference>
<dbReference type="SMR" id="Q8R9V5"/>
<dbReference type="STRING" id="273068.TTE1477"/>
<dbReference type="KEGG" id="tte:TTE1477"/>
<dbReference type="eggNOG" id="COG2030">
    <property type="taxonomic scope" value="Bacteria"/>
</dbReference>
<dbReference type="HOGENOM" id="CLU_095708_0_0_9"/>
<dbReference type="OrthoDB" id="1706183at2"/>
<dbReference type="Proteomes" id="UP000000555">
    <property type="component" value="Chromosome"/>
</dbReference>
<dbReference type="GO" id="GO:0003677">
    <property type="term" value="F:DNA binding"/>
    <property type="evidence" value="ECO:0007669"/>
    <property type="project" value="UniProtKB-KW"/>
</dbReference>
<dbReference type="GO" id="GO:0003700">
    <property type="term" value="F:DNA-binding transcription factor activity"/>
    <property type="evidence" value="ECO:0007669"/>
    <property type="project" value="UniProtKB-UniRule"/>
</dbReference>
<dbReference type="GO" id="GO:0006633">
    <property type="term" value="P:fatty acid biosynthetic process"/>
    <property type="evidence" value="ECO:0007669"/>
    <property type="project" value="UniProtKB-KW"/>
</dbReference>
<dbReference type="GO" id="GO:0045892">
    <property type="term" value="P:negative regulation of DNA-templated transcription"/>
    <property type="evidence" value="ECO:0007669"/>
    <property type="project" value="UniProtKB-UniRule"/>
</dbReference>
<dbReference type="GO" id="GO:0045717">
    <property type="term" value="P:negative regulation of fatty acid biosynthetic process"/>
    <property type="evidence" value="ECO:0007669"/>
    <property type="project" value="UniProtKB-UniRule"/>
</dbReference>
<dbReference type="CDD" id="cd03440">
    <property type="entry name" value="hot_dog"/>
    <property type="match status" value="1"/>
</dbReference>
<dbReference type="Gene3D" id="3.10.129.10">
    <property type="entry name" value="Hotdog Thioesterase"/>
    <property type="match status" value="1"/>
</dbReference>
<dbReference type="Gene3D" id="1.10.10.10">
    <property type="entry name" value="Winged helix-like DNA-binding domain superfamily/Winged helix DNA-binding domain"/>
    <property type="match status" value="1"/>
</dbReference>
<dbReference type="HAMAP" id="MF_01814">
    <property type="entry name" value="Transcrip_fact_FapR"/>
    <property type="match status" value="1"/>
</dbReference>
<dbReference type="InterPro" id="IPR029069">
    <property type="entry name" value="HotDog_dom_sf"/>
</dbReference>
<dbReference type="InterPro" id="IPR006683">
    <property type="entry name" value="Thioestr_dom"/>
</dbReference>
<dbReference type="InterPro" id="IPR017275">
    <property type="entry name" value="Transcription_factor_FapR"/>
</dbReference>
<dbReference type="InterPro" id="IPR036388">
    <property type="entry name" value="WH-like_DNA-bd_sf"/>
</dbReference>
<dbReference type="InterPro" id="IPR036390">
    <property type="entry name" value="WH_DNA-bd_sf"/>
</dbReference>
<dbReference type="NCBIfam" id="NF003359">
    <property type="entry name" value="PRK04424.1"/>
    <property type="match status" value="1"/>
</dbReference>
<dbReference type="Pfam" id="PF03061">
    <property type="entry name" value="4HBT"/>
    <property type="match status" value="1"/>
</dbReference>
<dbReference type="PIRSF" id="PIRSF037733">
    <property type="entry name" value="Transcription_factor_FapR"/>
    <property type="match status" value="1"/>
</dbReference>
<dbReference type="SUPFAM" id="SSF54637">
    <property type="entry name" value="Thioesterase/thiol ester dehydrase-isomerase"/>
    <property type="match status" value="1"/>
</dbReference>
<dbReference type="SUPFAM" id="SSF46785">
    <property type="entry name" value="Winged helix' DNA-binding domain"/>
    <property type="match status" value="1"/>
</dbReference>
<reference key="1">
    <citation type="journal article" date="2002" name="Genome Res.">
        <title>A complete sequence of the T. tengcongensis genome.</title>
        <authorList>
            <person name="Bao Q."/>
            <person name="Tian Y."/>
            <person name="Li W."/>
            <person name="Xu Z."/>
            <person name="Xuan Z."/>
            <person name="Hu S."/>
            <person name="Dong W."/>
            <person name="Yang J."/>
            <person name="Chen Y."/>
            <person name="Xue Y."/>
            <person name="Xu Y."/>
            <person name="Lai X."/>
            <person name="Huang L."/>
            <person name="Dong X."/>
            <person name="Ma Y."/>
            <person name="Ling L."/>
            <person name="Tan H."/>
            <person name="Chen R."/>
            <person name="Wang J."/>
            <person name="Yu J."/>
            <person name="Yang H."/>
        </authorList>
    </citation>
    <scope>NUCLEOTIDE SEQUENCE [LARGE SCALE GENOMIC DNA]</scope>
    <source>
        <strain>DSM 15242 / JCM 11007 / NBRC 100824 / MB4</strain>
    </source>
</reference>
<evidence type="ECO:0000255" key="1">
    <source>
        <dbReference type="HAMAP-Rule" id="MF_01814"/>
    </source>
</evidence>
<protein>
    <recommendedName>
        <fullName evidence="1">Transcription factor FapR</fullName>
    </recommendedName>
    <alternativeName>
        <fullName evidence="1">Fatty acid and phospholipid biosynthesis regulator</fullName>
    </alternativeName>
</protein>
<gene>
    <name evidence="1" type="primary">fapR</name>
    <name type="ordered locus">TTE1477</name>
</gene>
<organism>
    <name type="scientific">Caldanaerobacter subterraneus subsp. tengcongensis (strain DSM 15242 / JCM 11007 / NBRC 100824 / MB4)</name>
    <name type="common">Thermoanaerobacter tengcongensis</name>
    <dbReference type="NCBI Taxonomy" id="273068"/>
    <lineage>
        <taxon>Bacteria</taxon>
        <taxon>Bacillati</taxon>
        <taxon>Bacillota</taxon>
        <taxon>Clostridia</taxon>
        <taxon>Thermoanaerobacterales</taxon>
        <taxon>Thermoanaerobacteraceae</taxon>
        <taxon>Caldanaerobacter</taxon>
    </lineage>
</organism>
<feature type="chain" id="PRO_0000172836" description="Transcription factor FapR">
    <location>
        <begin position="1"/>
        <end position="200"/>
    </location>
</feature>
<name>FAPR_CALS4</name>
<keyword id="KW-0238">DNA-binding</keyword>
<keyword id="KW-0275">Fatty acid biosynthesis</keyword>
<keyword id="KW-0276">Fatty acid metabolism</keyword>
<keyword id="KW-0444">Lipid biosynthesis</keyword>
<keyword id="KW-0443">Lipid metabolism</keyword>
<keyword id="KW-1185">Reference proteome</keyword>
<keyword id="KW-0678">Repressor</keyword>
<keyword id="KW-0804">Transcription</keyword>
<keyword id="KW-0805">Transcription regulation</keyword>
<proteinExistence type="inferred from homology"/>
<accession>Q8R9V5</accession>
<comment type="function">
    <text evidence="1">Transcriptional factor involved in regulation of membrane lipid biosynthesis by repressing genes involved in fatty acid and phospholipid metabolism.</text>
</comment>
<comment type="similarity">
    <text evidence="1">Belongs to the FapR family.</text>
</comment>